<accession>Q8R2R3</accession>
<accession>Q3TW04</accession>
<accession>Q9CV78</accession>
<organism>
    <name type="scientific">Mus musculus</name>
    <name type="common">Mouse</name>
    <dbReference type="NCBI Taxonomy" id="10090"/>
    <lineage>
        <taxon>Eukaryota</taxon>
        <taxon>Metazoa</taxon>
        <taxon>Chordata</taxon>
        <taxon>Craniata</taxon>
        <taxon>Vertebrata</taxon>
        <taxon>Euteleostomi</taxon>
        <taxon>Mammalia</taxon>
        <taxon>Eutheria</taxon>
        <taxon>Euarchontoglires</taxon>
        <taxon>Glires</taxon>
        <taxon>Rodentia</taxon>
        <taxon>Myomorpha</taxon>
        <taxon>Muroidea</taxon>
        <taxon>Muridae</taxon>
        <taxon>Murinae</taxon>
        <taxon>Mus</taxon>
        <taxon>Mus</taxon>
    </lineage>
</organism>
<name>AAGAB_MOUSE</name>
<evidence type="ECO:0000250" key="1"/>
<evidence type="ECO:0000256" key="2">
    <source>
        <dbReference type="SAM" id="MobiDB-lite"/>
    </source>
</evidence>
<evidence type="ECO:0000305" key="3"/>
<evidence type="ECO:0007744" key="4">
    <source>
    </source>
</evidence>
<sequence>MAAGVPCALVTSCSATFTGDRLVQHILGTEDAVVEATSSDAVRFYPWTIDNKYYSAEINLCVVPSKFLVTAEIAESVQAFVVYFDSTQKSGLDSVSSWLPLAEAWLAEVMILVCDRVCDDGINRQQAQEWCIKHGFELVELNPEELPEEDDDFPESTGVKRIVQALNANVWSNVVMKSDRSQGFSLLNSLAGANRRVASAESCHSEQQEPSPTAERTESLPGHHSGACGSAGAQVDSIVDPMLDLDIQELASLTTGGGDLENFERLFSKLKEMKDKAATLPHEQRKLHAEKVAKAFWMAIGGDRDEIEGLSSDDEH</sequence>
<comment type="function">
    <text evidence="1">May be involved in endocytic recycling of growth factor receptors such as EGFR.</text>
</comment>
<comment type="subunit">
    <text evidence="1">Associated with AP-1 and AP-2 complexes.</text>
</comment>
<comment type="subcellular location">
    <subcellularLocation>
        <location evidence="1">Cytoplasm</location>
        <location evidence="1">Cytosol</location>
    </subcellularLocation>
</comment>
<dbReference type="EMBL" id="AK159897">
    <property type="protein sequence ID" value="BAE35463.1"/>
    <property type="molecule type" value="mRNA"/>
</dbReference>
<dbReference type="EMBL" id="AK009203">
    <property type="protein sequence ID" value="BAB26137.1"/>
    <property type="molecule type" value="mRNA"/>
</dbReference>
<dbReference type="EMBL" id="CH466522">
    <property type="protein sequence ID" value="EDL26044.1"/>
    <property type="molecule type" value="Genomic_DNA"/>
</dbReference>
<dbReference type="EMBL" id="BC027311">
    <property type="protein sequence ID" value="AAH27311.1"/>
    <property type="molecule type" value="mRNA"/>
</dbReference>
<dbReference type="CCDS" id="CCDS23271.1"/>
<dbReference type="RefSeq" id="NP_080133.1">
    <property type="nucleotide sequence ID" value="NM_025857.3"/>
</dbReference>
<dbReference type="SMR" id="Q8R2R3"/>
<dbReference type="BioGRID" id="211824">
    <property type="interactions" value="2"/>
</dbReference>
<dbReference type="FunCoup" id="Q8R2R3">
    <property type="interactions" value="2566"/>
</dbReference>
<dbReference type="STRING" id="10090.ENSMUSP00000048595"/>
<dbReference type="iPTMnet" id="Q8R2R3"/>
<dbReference type="PhosphoSitePlus" id="Q8R2R3"/>
<dbReference type="SwissPalm" id="Q8R2R3"/>
<dbReference type="jPOST" id="Q8R2R3"/>
<dbReference type="PaxDb" id="10090-ENSMUSP00000048595"/>
<dbReference type="PeptideAtlas" id="Q8R2R3"/>
<dbReference type="ProteomicsDB" id="296463"/>
<dbReference type="Pumba" id="Q8R2R3"/>
<dbReference type="Antibodypedia" id="26235">
    <property type="antibodies" value="116 antibodies from 21 providers"/>
</dbReference>
<dbReference type="Ensembl" id="ENSMUST00000041551.9">
    <property type="protein sequence ID" value="ENSMUSP00000048595.8"/>
    <property type="gene ID" value="ENSMUSG00000037257.9"/>
</dbReference>
<dbReference type="GeneID" id="66939"/>
<dbReference type="KEGG" id="mmu:66939"/>
<dbReference type="UCSC" id="uc009qbf.1">
    <property type="organism name" value="mouse"/>
</dbReference>
<dbReference type="AGR" id="MGI:1914189"/>
<dbReference type="CTD" id="79719"/>
<dbReference type="MGI" id="MGI:1914189">
    <property type="gene designation" value="Aagab"/>
</dbReference>
<dbReference type="VEuPathDB" id="HostDB:ENSMUSG00000037257"/>
<dbReference type="eggNOG" id="KOG4273">
    <property type="taxonomic scope" value="Eukaryota"/>
</dbReference>
<dbReference type="GeneTree" id="ENSGT00390000007218"/>
<dbReference type="HOGENOM" id="CLU_056826_0_0_1"/>
<dbReference type="InParanoid" id="Q8R2R3"/>
<dbReference type="OMA" id="NEASHSF"/>
<dbReference type="OrthoDB" id="10261384at2759"/>
<dbReference type="PhylomeDB" id="Q8R2R3"/>
<dbReference type="TreeFam" id="TF328856"/>
<dbReference type="BioGRID-ORCS" id="66939">
    <property type="hits" value="14 hits in 77 CRISPR screens"/>
</dbReference>
<dbReference type="ChiTaRS" id="Aagab">
    <property type="organism name" value="mouse"/>
</dbReference>
<dbReference type="PRO" id="PR:Q8R2R3"/>
<dbReference type="Proteomes" id="UP000000589">
    <property type="component" value="Chromosome 9"/>
</dbReference>
<dbReference type="RNAct" id="Q8R2R3">
    <property type="molecule type" value="protein"/>
</dbReference>
<dbReference type="Bgee" id="ENSMUSG00000037257">
    <property type="expression patterns" value="Expressed in dorsal pancreas and 250 other cell types or tissues"/>
</dbReference>
<dbReference type="ExpressionAtlas" id="Q8R2R3">
    <property type="expression patterns" value="baseline and differential"/>
</dbReference>
<dbReference type="GO" id="GO:0005829">
    <property type="term" value="C:cytosol"/>
    <property type="evidence" value="ECO:0007669"/>
    <property type="project" value="UniProtKB-SubCell"/>
</dbReference>
<dbReference type="GO" id="GO:0016607">
    <property type="term" value="C:nuclear speck"/>
    <property type="evidence" value="ECO:0007669"/>
    <property type="project" value="Ensembl"/>
</dbReference>
<dbReference type="GO" id="GO:0015031">
    <property type="term" value="P:protein transport"/>
    <property type="evidence" value="ECO:0007669"/>
    <property type="project" value="UniProtKB-KW"/>
</dbReference>
<dbReference type="FunFam" id="3.40.50.11960:FF:000001">
    <property type="entry name" value="alpha- and gamma-adaptin-binding protein p34 isoform X1"/>
    <property type="match status" value="1"/>
</dbReference>
<dbReference type="Gene3D" id="3.40.50.11960">
    <property type="match status" value="1"/>
</dbReference>
<dbReference type="InterPro" id="IPR019341">
    <property type="entry name" value="Alpha/Gamma-adaptin-bd_p34"/>
</dbReference>
<dbReference type="PANTHER" id="PTHR14659">
    <property type="entry name" value="ALPHA- AND GAMMA-ADAPTIN-BINDING PROTEIN P34"/>
    <property type="match status" value="1"/>
</dbReference>
<dbReference type="PANTHER" id="PTHR14659:SF1">
    <property type="entry name" value="ALPHA- AND GAMMA-ADAPTIN-BINDING PROTEIN P34"/>
    <property type="match status" value="1"/>
</dbReference>
<dbReference type="Pfam" id="PF10199">
    <property type="entry name" value="Adaptin_binding"/>
    <property type="match status" value="1"/>
</dbReference>
<feature type="chain" id="PRO_0000058135" description="Alpha- and gamma-adaptin-binding protein p34">
    <location>
        <begin position="1"/>
        <end position="316"/>
    </location>
</feature>
<feature type="region of interest" description="Disordered" evidence="2">
    <location>
        <begin position="198"/>
        <end position="232"/>
    </location>
</feature>
<feature type="compositionally biased region" description="Low complexity" evidence="2">
    <location>
        <begin position="222"/>
        <end position="232"/>
    </location>
</feature>
<feature type="modified residue" description="Phosphoserine" evidence="4">
    <location>
        <position position="311"/>
    </location>
</feature>
<feature type="modified residue" description="Phosphoserine" evidence="4">
    <location>
        <position position="312"/>
    </location>
</feature>
<feature type="sequence conflict" description="In Ref. 3; AAH27311." evidence="3" ref="3">
    <original>D</original>
    <variation>N</variation>
    <location>
        <position position="151"/>
    </location>
</feature>
<protein>
    <recommendedName>
        <fullName>Alpha- and gamma-adaptin-binding protein p34</fullName>
    </recommendedName>
</protein>
<proteinExistence type="evidence at protein level"/>
<reference key="1">
    <citation type="journal article" date="2005" name="Science">
        <title>The transcriptional landscape of the mammalian genome.</title>
        <authorList>
            <person name="Carninci P."/>
            <person name="Kasukawa T."/>
            <person name="Katayama S."/>
            <person name="Gough J."/>
            <person name="Frith M.C."/>
            <person name="Maeda N."/>
            <person name="Oyama R."/>
            <person name="Ravasi T."/>
            <person name="Lenhard B."/>
            <person name="Wells C."/>
            <person name="Kodzius R."/>
            <person name="Shimokawa K."/>
            <person name="Bajic V.B."/>
            <person name="Brenner S.E."/>
            <person name="Batalov S."/>
            <person name="Forrest A.R."/>
            <person name="Zavolan M."/>
            <person name="Davis M.J."/>
            <person name="Wilming L.G."/>
            <person name="Aidinis V."/>
            <person name="Allen J.E."/>
            <person name="Ambesi-Impiombato A."/>
            <person name="Apweiler R."/>
            <person name="Aturaliya R.N."/>
            <person name="Bailey T.L."/>
            <person name="Bansal M."/>
            <person name="Baxter L."/>
            <person name="Beisel K.W."/>
            <person name="Bersano T."/>
            <person name="Bono H."/>
            <person name="Chalk A.M."/>
            <person name="Chiu K.P."/>
            <person name="Choudhary V."/>
            <person name="Christoffels A."/>
            <person name="Clutterbuck D.R."/>
            <person name="Crowe M.L."/>
            <person name="Dalla E."/>
            <person name="Dalrymple B.P."/>
            <person name="de Bono B."/>
            <person name="Della Gatta G."/>
            <person name="di Bernardo D."/>
            <person name="Down T."/>
            <person name="Engstrom P."/>
            <person name="Fagiolini M."/>
            <person name="Faulkner G."/>
            <person name="Fletcher C.F."/>
            <person name="Fukushima T."/>
            <person name="Furuno M."/>
            <person name="Futaki S."/>
            <person name="Gariboldi M."/>
            <person name="Georgii-Hemming P."/>
            <person name="Gingeras T.R."/>
            <person name="Gojobori T."/>
            <person name="Green R.E."/>
            <person name="Gustincich S."/>
            <person name="Harbers M."/>
            <person name="Hayashi Y."/>
            <person name="Hensch T.K."/>
            <person name="Hirokawa N."/>
            <person name="Hill D."/>
            <person name="Huminiecki L."/>
            <person name="Iacono M."/>
            <person name="Ikeo K."/>
            <person name="Iwama A."/>
            <person name="Ishikawa T."/>
            <person name="Jakt M."/>
            <person name="Kanapin A."/>
            <person name="Katoh M."/>
            <person name="Kawasawa Y."/>
            <person name="Kelso J."/>
            <person name="Kitamura H."/>
            <person name="Kitano H."/>
            <person name="Kollias G."/>
            <person name="Krishnan S.P."/>
            <person name="Kruger A."/>
            <person name="Kummerfeld S.K."/>
            <person name="Kurochkin I.V."/>
            <person name="Lareau L.F."/>
            <person name="Lazarevic D."/>
            <person name="Lipovich L."/>
            <person name="Liu J."/>
            <person name="Liuni S."/>
            <person name="McWilliam S."/>
            <person name="Madan Babu M."/>
            <person name="Madera M."/>
            <person name="Marchionni L."/>
            <person name="Matsuda H."/>
            <person name="Matsuzawa S."/>
            <person name="Miki H."/>
            <person name="Mignone F."/>
            <person name="Miyake S."/>
            <person name="Morris K."/>
            <person name="Mottagui-Tabar S."/>
            <person name="Mulder N."/>
            <person name="Nakano N."/>
            <person name="Nakauchi H."/>
            <person name="Ng P."/>
            <person name="Nilsson R."/>
            <person name="Nishiguchi S."/>
            <person name="Nishikawa S."/>
            <person name="Nori F."/>
            <person name="Ohara O."/>
            <person name="Okazaki Y."/>
            <person name="Orlando V."/>
            <person name="Pang K.C."/>
            <person name="Pavan W.J."/>
            <person name="Pavesi G."/>
            <person name="Pesole G."/>
            <person name="Petrovsky N."/>
            <person name="Piazza S."/>
            <person name="Reed J."/>
            <person name="Reid J.F."/>
            <person name="Ring B.Z."/>
            <person name="Ringwald M."/>
            <person name="Rost B."/>
            <person name="Ruan Y."/>
            <person name="Salzberg S.L."/>
            <person name="Sandelin A."/>
            <person name="Schneider C."/>
            <person name="Schoenbach C."/>
            <person name="Sekiguchi K."/>
            <person name="Semple C.A."/>
            <person name="Seno S."/>
            <person name="Sessa L."/>
            <person name="Sheng Y."/>
            <person name="Shibata Y."/>
            <person name="Shimada H."/>
            <person name="Shimada K."/>
            <person name="Silva D."/>
            <person name="Sinclair B."/>
            <person name="Sperling S."/>
            <person name="Stupka E."/>
            <person name="Sugiura K."/>
            <person name="Sultana R."/>
            <person name="Takenaka Y."/>
            <person name="Taki K."/>
            <person name="Tammoja K."/>
            <person name="Tan S.L."/>
            <person name="Tang S."/>
            <person name="Taylor M.S."/>
            <person name="Tegner J."/>
            <person name="Teichmann S.A."/>
            <person name="Ueda H.R."/>
            <person name="van Nimwegen E."/>
            <person name="Verardo R."/>
            <person name="Wei C.L."/>
            <person name="Yagi K."/>
            <person name="Yamanishi H."/>
            <person name="Zabarovsky E."/>
            <person name="Zhu S."/>
            <person name="Zimmer A."/>
            <person name="Hide W."/>
            <person name="Bult C."/>
            <person name="Grimmond S.M."/>
            <person name="Teasdale R.D."/>
            <person name="Liu E.T."/>
            <person name="Brusic V."/>
            <person name="Quackenbush J."/>
            <person name="Wahlestedt C."/>
            <person name="Mattick J.S."/>
            <person name="Hume D.A."/>
            <person name="Kai C."/>
            <person name="Sasaki D."/>
            <person name="Tomaru Y."/>
            <person name="Fukuda S."/>
            <person name="Kanamori-Katayama M."/>
            <person name="Suzuki M."/>
            <person name="Aoki J."/>
            <person name="Arakawa T."/>
            <person name="Iida J."/>
            <person name="Imamura K."/>
            <person name="Itoh M."/>
            <person name="Kato T."/>
            <person name="Kawaji H."/>
            <person name="Kawagashira N."/>
            <person name="Kawashima T."/>
            <person name="Kojima M."/>
            <person name="Kondo S."/>
            <person name="Konno H."/>
            <person name="Nakano K."/>
            <person name="Ninomiya N."/>
            <person name="Nishio T."/>
            <person name="Okada M."/>
            <person name="Plessy C."/>
            <person name="Shibata K."/>
            <person name="Shiraki T."/>
            <person name="Suzuki S."/>
            <person name="Tagami M."/>
            <person name="Waki K."/>
            <person name="Watahiki A."/>
            <person name="Okamura-Oho Y."/>
            <person name="Suzuki H."/>
            <person name="Kawai J."/>
            <person name="Hayashizaki Y."/>
        </authorList>
    </citation>
    <scope>NUCLEOTIDE SEQUENCE [LARGE SCALE MRNA]</scope>
    <source>
        <strain>C57BL/6J</strain>
        <tissue>Tongue</tissue>
    </source>
</reference>
<reference key="2">
    <citation type="submission" date="2005-07" db="EMBL/GenBank/DDBJ databases">
        <authorList>
            <person name="Mural R.J."/>
            <person name="Adams M.D."/>
            <person name="Myers E.W."/>
            <person name="Smith H.O."/>
            <person name="Venter J.C."/>
        </authorList>
    </citation>
    <scope>NUCLEOTIDE SEQUENCE [LARGE SCALE GENOMIC DNA]</scope>
</reference>
<reference key="3">
    <citation type="journal article" date="2004" name="Genome Res.">
        <title>The status, quality, and expansion of the NIH full-length cDNA project: the Mammalian Gene Collection (MGC).</title>
        <authorList>
            <consortium name="The MGC Project Team"/>
        </authorList>
    </citation>
    <scope>NUCLEOTIDE SEQUENCE [LARGE SCALE MRNA]</scope>
    <source>
        <strain>FVB/N</strain>
        <tissue>Mammary tumor</tissue>
    </source>
</reference>
<reference key="4">
    <citation type="journal article" date="2010" name="Cell">
        <title>A tissue-specific atlas of mouse protein phosphorylation and expression.</title>
        <authorList>
            <person name="Huttlin E.L."/>
            <person name="Jedrychowski M.P."/>
            <person name="Elias J.E."/>
            <person name="Goswami T."/>
            <person name="Rad R."/>
            <person name="Beausoleil S.A."/>
            <person name="Villen J."/>
            <person name="Haas W."/>
            <person name="Sowa M.E."/>
            <person name="Gygi S.P."/>
        </authorList>
    </citation>
    <scope>PHOSPHORYLATION [LARGE SCALE ANALYSIS] AT SER-311 AND SER-312</scope>
    <scope>IDENTIFICATION BY MASS SPECTROMETRY [LARGE SCALE ANALYSIS]</scope>
    <source>
        <tissue>Brain</tissue>
        <tissue>Kidney</tissue>
        <tissue>Liver</tissue>
        <tissue>Lung</tissue>
        <tissue>Pancreas</tissue>
        <tissue>Spleen</tissue>
        <tissue>Testis</tissue>
    </source>
</reference>
<keyword id="KW-0963">Cytoplasm</keyword>
<keyword id="KW-0597">Phosphoprotein</keyword>
<keyword id="KW-0653">Protein transport</keyword>
<keyword id="KW-1185">Reference proteome</keyword>
<keyword id="KW-0813">Transport</keyword>
<gene>
    <name type="primary">Aagab</name>
</gene>